<organism>
    <name type="scientific">Burkholderia lata (strain ATCC 17760 / DSM 23089 / LMG 22485 / NCIMB 9086 / R18194 / 383)</name>
    <dbReference type="NCBI Taxonomy" id="482957"/>
    <lineage>
        <taxon>Bacteria</taxon>
        <taxon>Pseudomonadati</taxon>
        <taxon>Pseudomonadota</taxon>
        <taxon>Betaproteobacteria</taxon>
        <taxon>Burkholderiales</taxon>
        <taxon>Burkholderiaceae</taxon>
        <taxon>Burkholderia</taxon>
        <taxon>Burkholderia cepacia complex</taxon>
    </lineage>
</organism>
<comment type="function">
    <text evidence="1">Functions in the biosynthesis of branched-chain amino acids. Catalyzes the dehydration of (2R,3R)-2,3-dihydroxy-3-methylpentanoate (2,3-dihydroxy-3-methylvalerate) into 2-oxo-3-methylpentanoate (2-oxo-3-methylvalerate) and of (2R)-2,3-dihydroxy-3-methylbutanoate (2,3-dihydroxyisovalerate) into 2-oxo-3-methylbutanoate (2-oxoisovalerate), the penultimate precursor to L-isoleucine and L-valine, respectively.</text>
</comment>
<comment type="catalytic activity">
    <reaction evidence="1">
        <text>(2R)-2,3-dihydroxy-3-methylbutanoate = 3-methyl-2-oxobutanoate + H2O</text>
        <dbReference type="Rhea" id="RHEA:24809"/>
        <dbReference type="ChEBI" id="CHEBI:11851"/>
        <dbReference type="ChEBI" id="CHEBI:15377"/>
        <dbReference type="ChEBI" id="CHEBI:49072"/>
        <dbReference type="EC" id="4.2.1.9"/>
    </reaction>
    <physiologicalReaction direction="left-to-right" evidence="1">
        <dbReference type="Rhea" id="RHEA:24810"/>
    </physiologicalReaction>
</comment>
<comment type="catalytic activity">
    <reaction evidence="1">
        <text>(2R,3R)-2,3-dihydroxy-3-methylpentanoate = (S)-3-methyl-2-oxopentanoate + H2O</text>
        <dbReference type="Rhea" id="RHEA:27694"/>
        <dbReference type="ChEBI" id="CHEBI:15377"/>
        <dbReference type="ChEBI" id="CHEBI:35146"/>
        <dbReference type="ChEBI" id="CHEBI:49258"/>
        <dbReference type="EC" id="4.2.1.9"/>
    </reaction>
    <physiologicalReaction direction="left-to-right" evidence="1">
        <dbReference type="Rhea" id="RHEA:27695"/>
    </physiologicalReaction>
</comment>
<comment type="cofactor">
    <cofactor evidence="1">
        <name>[2Fe-2S] cluster</name>
        <dbReference type="ChEBI" id="CHEBI:190135"/>
    </cofactor>
    <text evidence="1">Binds 1 [2Fe-2S] cluster per subunit. This cluster acts as a Lewis acid cofactor.</text>
</comment>
<comment type="cofactor">
    <cofactor evidence="1">
        <name>Mg(2+)</name>
        <dbReference type="ChEBI" id="CHEBI:18420"/>
    </cofactor>
</comment>
<comment type="pathway">
    <text evidence="1">Amino-acid biosynthesis; L-isoleucine biosynthesis; L-isoleucine from 2-oxobutanoate: step 3/4.</text>
</comment>
<comment type="pathway">
    <text evidence="1">Amino-acid biosynthesis; L-valine biosynthesis; L-valine from pyruvate: step 3/4.</text>
</comment>
<comment type="subunit">
    <text evidence="1">Homodimer.</text>
</comment>
<comment type="similarity">
    <text evidence="1">Belongs to the IlvD/Edd family.</text>
</comment>
<accession>Q394V3</accession>
<feature type="chain" id="PRO_0000225379" description="Dihydroxy-acid dehydratase 1">
    <location>
        <begin position="1"/>
        <end position="619"/>
    </location>
</feature>
<feature type="active site" description="Proton acceptor" evidence="1">
    <location>
        <position position="522"/>
    </location>
</feature>
<feature type="binding site" evidence="1">
    <location>
        <position position="81"/>
    </location>
    <ligand>
        <name>Mg(2+)</name>
        <dbReference type="ChEBI" id="CHEBI:18420"/>
    </ligand>
</feature>
<feature type="binding site" evidence="1">
    <location>
        <position position="122"/>
    </location>
    <ligand>
        <name>[2Fe-2S] cluster</name>
        <dbReference type="ChEBI" id="CHEBI:190135"/>
    </ligand>
</feature>
<feature type="binding site" evidence="1">
    <location>
        <position position="123"/>
    </location>
    <ligand>
        <name>Mg(2+)</name>
        <dbReference type="ChEBI" id="CHEBI:18420"/>
    </ligand>
</feature>
<feature type="binding site" description="via carbamate group" evidence="1">
    <location>
        <position position="124"/>
    </location>
    <ligand>
        <name>Mg(2+)</name>
        <dbReference type="ChEBI" id="CHEBI:18420"/>
    </ligand>
</feature>
<feature type="binding site" evidence="1">
    <location>
        <position position="201"/>
    </location>
    <ligand>
        <name>[2Fe-2S] cluster</name>
        <dbReference type="ChEBI" id="CHEBI:190135"/>
    </ligand>
</feature>
<feature type="binding site" evidence="1">
    <location>
        <position position="496"/>
    </location>
    <ligand>
        <name>Mg(2+)</name>
        <dbReference type="ChEBI" id="CHEBI:18420"/>
    </ligand>
</feature>
<feature type="modified residue" description="N6-carboxylysine" evidence="1">
    <location>
        <position position="124"/>
    </location>
</feature>
<sequence>MPTYRSKTSTAGRNMAGARSLWRATGMKDDDFSKPIIAVVNSFTQFVPGHVHLKDLGQLVAREIEAAGGVAKEFNTIAVDDGIAMGHDGMLYSLPSRDIIADSVEYMVNAHCADAMVCISNCDKITPGMLMAAMRLNIPVIFVSGGPMEAGKTRLANPVTKAIEVKKLDLVDAMVIAVDPSYSDAEVAEVERSACPTCGSCSGMFTANSMNCLTEALGLSLPGNGTVVATHADREQLFKRAGRRIVELTRQHYEQDDERVLPRSVGFKAFENAMTLDIAMGGSTNTILHLLAIAQEAGIDFTMKDIDRLSRVVPQLCKVAPNTNKYHIEDVHRAGGIMAILGELDRAGKLHTDVPTVHTPSLKDALDQWDIVRTQDDAVRTFYQAGPAGVPTQVAFSQNTRWPSLDLDRAEGCIRSYEHAFSKEGGLAVLTGNIALDGCVVKTAGVDESILVFEGTAHVTESQDEAVENILNDKVKAGDVVIVRYEGPKGGPGMQEMLYPTSYIKSKGLGKACALLTDGRFSGGTSGLSIGHCSPEAAAGGAIGLVRDGDKIRIDIPNRTINVLVSDEELARRREEQNAKGWKPAQPRPRKVSAALKAYAKLVMSADKGAVRDLSLLDD</sequence>
<gene>
    <name evidence="1" type="primary">ilvD1</name>
    <name type="ordered locus">Bcep18194_B1899</name>
</gene>
<keyword id="KW-0001">2Fe-2S</keyword>
<keyword id="KW-0028">Amino-acid biosynthesis</keyword>
<keyword id="KW-0100">Branched-chain amino acid biosynthesis</keyword>
<keyword id="KW-0408">Iron</keyword>
<keyword id="KW-0411">Iron-sulfur</keyword>
<keyword id="KW-0456">Lyase</keyword>
<keyword id="KW-0460">Magnesium</keyword>
<keyword id="KW-0479">Metal-binding</keyword>
<proteinExistence type="inferred from homology"/>
<evidence type="ECO:0000255" key="1">
    <source>
        <dbReference type="HAMAP-Rule" id="MF_00012"/>
    </source>
</evidence>
<reference key="1">
    <citation type="submission" date="2005-10" db="EMBL/GenBank/DDBJ databases">
        <title>Complete sequence of chromosome 2 of Burkholderia sp. 383.</title>
        <authorList>
            <consortium name="US DOE Joint Genome Institute"/>
            <person name="Copeland A."/>
            <person name="Lucas S."/>
            <person name="Lapidus A."/>
            <person name="Barry K."/>
            <person name="Detter J.C."/>
            <person name="Glavina T."/>
            <person name="Hammon N."/>
            <person name="Israni S."/>
            <person name="Pitluck S."/>
            <person name="Chain P."/>
            <person name="Malfatti S."/>
            <person name="Shin M."/>
            <person name="Vergez L."/>
            <person name="Schmutz J."/>
            <person name="Larimer F."/>
            <person name="Land M."/>
            <person name="Kyrpides N."/>
            <person name="Lykidis A."/>
            <person name="Richardson P."/>
        </authorList>
    </citation>
    <scope>NUCLEOTIDE SEQUENCE [LARGE SCALE GENOMIC DNA]</scope>
    <source>
        <strain>ATCC 17760 / DSM 23089 / LMG 22485 / NCIMB 9086 / R18194 / 383</strain>
    </source>
</reference>
<name>ILVD1_BURL3</name>
<protein>
    <recommendedName>
        <fullName evidence="1">Dihydroxy-acid dehydratase 1</fullName>
        <shortName evidence="1">DAD 1</shortName>
        <ecNumber evidence="1">4.2.1.9</ecNumber>
    </recommendedName>
</protein>
<dbReference type="EC" id="4.2.1.9" evidence="1"/>
<dbReference type="EMBL" id="CP000152">
    <property type="protein sequence ID" value="ABB12013.1"/>
    <property type="molecule type" value="Genomic_DNA"/>
</dbReference>
<dbReference type="RefSeq" id="WP_011355498.1">
    <property type="nucleotide sequence ID" value="NC_007511.1"/>
</dbReference>
<dbReference type="SMR" id="Q394V3"/>
<dbReference type="GeneID" id="45098232"/>
<dbReference type="KEGG" id="bur:Bcep18194_B1899"/>
<dbReference type="PATRIC" id="fig|482957.22.peg.5639"/>
<dbReference type="HOGENOM" id="CLU_014271_4_2_4"/>
<dbReference type="UniPathway" id="UPA00047">
    <property type="reaction ID" value="UER00057"/>
</dbReference>
<dbReference type="UniPathway" id="UPA00049">
    <property type="reaction ID" value="UER00061"/>
</dbReference>
<dbReference type="Proteomes" id="UP000002705">
    <property type="component" value="Chromosome 2"/>
</dbReference>
<dbReference type="GO" id="GO:0005829">
    <property type="term" value="C:cytosol"/>
    <property type="evidence" value="ECO:0007669"/>
    <property type="project" value="TreeGrafter"/>
</dbReference>
<dbReference type="GO" id="GO:0051537">
    <property type="term" value="F:2 iron, 2 sulfur cluster binding"/>
    <property type="evidence" value="ECO:0007669"/>
    <property type="project" value="UniProtKB-UniRule"/>
</dbReference>
<dbReference type="GO" id="GO:0004160">
    <property type="term" value="F:dihydroxy-acid dehydratase activity"/>
    <property type="evidence" value="ECO:0007669"/>
    <property type="project" value="UniProtKB-UniRule"/>
</dbReference>
<dbReference type="GO" id="GO:0000287">
    <property type="term" value="F:magnesium ion binding"/>
    <property type="evidence" value="ECO:0007669"/>
    <property type="project" value="UniProtKB-UniRule"/>
</dbReference>
<dbReference type="GO" id="GO:0009097">
    <property type="term" value="P:isoleucine biosynthetic process"/>
    <property type="evidence" value="ECO:0007669"/>
    <property type="project" value="UniProtKB-UniRule"/>
</dbReference>
<dbReference type="GO" id="GO:0009099">
    <property type="term" value="P:L-valine biosynthetic process"/>
    <property type="evidence" value="ECO:0007669"/>
    <property type="project" value="UniProtKB-UniRule"/>
</dbReference>
<dbReference type="FunFam" id="3.50.30.80:FF:000001">
    <property type="entry name" value="Dihydroxy-acid dehydratase"/>
    <property type="match status" value="1"/>
</dbReference>
<dbReference type="Gene3D" id="3.50.30.80">
    <property type="entry name" value="IlvD/EDD C-terminal domain-like"/>
    <property type="match status" value="1"/>
</dbReference>
<dbReference type="HAMAP" id="MF_00012">
    <property type="entry name" value="IlvD"/>
    <property type="match status" value="1"/>
</dbReference>
<dbReference type="InterPro" id="IPR042096">
    <property type="entry name" value="Dihydro-acid_dehy_C"/>
</dbReference>
<dbReference type="InterPro" id="IPR004404">
    <property type="entry name" value="DihydroxyA_deHydtase"/>
</dbReference>
<dbReference type="InterPro" id="IPR020558">
    <property type="entry name" value="DiOHA_6PGluconate_deHydtase_CS"/>
</dbReference>
<dbReference type="InterPro" id="IPR056740">
    <property type="entry name" value="ILV_EDD_C"/>
</dbReference>
<dbReference type="InterPro" id="IPR000581">
    <property type="entry name" value="ILV_EDD_N"/>
</dbReference>
<dbReference type="InterPro" id="IPR037237">
    <property type="entry name" value="IlvD/EDD_N"/>
</dbReference>
<dbReference type="NCBIfam" id="TIGR00110">
    <property type="entry name" value="ilvD"/>
    <property type="match status" value="1"/>
</dbReference>
<dbReference type="NCBIfam" id="NF009103">
    <property type="entry name" value="PRK12448.1"/>
    <property type="match status" value="1"/>
</dbReference>
<dbReference type="PANTHER" id="PTHR43661">
    <property type="entry name" value="D-XYLONATE DEHYDRATASE"/>
    <property type="match status" value="1"/>
</dbReference>
<dbReference type="PANTHER" id="PTHR43661:SF3">
    <property type="entry name" value="D-XYLONATE DEHYDRATASE YAGF-RELATED"/>
    <property type="match status" value="1"/>
</dbReference>
<dbReference type="Pfam" id="PF24877">
    <property type="entry name" value="ILV_EDD_C"/>
    <property type="match status" value="1"/>
</dbReference>
<dbReference type="Pfam" id="PF00920">
    <property type="entry name" value="ILVD_EDD_N"/>
    <property type="match status" value="1"/>
</dbReference>
<dbReference type="SUPFAM" id="SSF143975">
    <property type="entry name" value="IlvD/EDD N-terminal domain-like"/>
    <property type="match status" value="1"/>
</dbReference>
<dbReference type="SUPFAM" id="SSF52016">
    <property type="entry name" value="LeuD/IlvD-like"/>
    <property type="match status" value="1"/>
</dbReference>
<dbReference type="PROSITE" id="PS00886">
    <property type="entry name" value="ILVD_EDD_1"/>
    <property type="match status" value="1"/>
</dbReference>
<dbReference type="PROSITE" id="PS00887">
    <property type="entry name" value="ILVD_EDD_2"/>
    <property type="match status" value="1"/>
</dbReference>